<sequence length="1069" mass="121709">MDDKASVGKISVSSDSVSTLNSEDFVLVSRQGDETPSTNNGSDDEKTGLKIVGNGSEQQLQKELADVLMDPPMDDQPGEKELVKRSQLDGEGDGPLSNQLSASSTINPVPLVGLQKPEMSLPVKPGQGDSEASSPFTPVADEDSVVFSKLTYLGCASVNAPRSEVEALRMMSILRSQCQISLDVTLSVPNVSEGIVRLLDPQTNTEIANYPIYKILFCVRGHDGTPESDCFAFTESHYNAELFRIHVFRCEIQEAVSRILYSFATAFRRSAKQTPLSATAAPQTPDSDIFTFSVSLEIKEDDGKGYFSAVPKDKDRQCFKLRQGIDKKIVIYVQQTTNKELAIERCFGLLLSPGKDVRNSDMHLLDLESMGKSSDGKSYVITGSWNPKSPHFQVVNEETPKDKVLFMTTAVDLVITEVQEPVRFLLETKVRVCSPNERLFWPFSKRSTTENFFLKLKQIKQKERKNNTDTLYEVVCLESESERERRKTTASPSVRLPQSGSQSSVIPSPPEDDEEEDNDEPLLSGSGDVSKECAEKILETWGELLSKWHLNLNVRPKQLSSLVRNGVPEALRGEVWQLLAGCHNNDHLVEKYRILITKESPQDSAITRDINRTFPAHDYFKDTGGDGQDSLYKICKAYSVYDEEIGYCQGQSFLAAVLLLHMPEEQAFSVLVKIMFDYGLRELFKQNFEDLHCKFYQLERLMQEYIPDLYNHFLDISLEAHMYASQWFLTLFTAKFPLYMVFHIIDLLLCEGISVIFNVALGLLKTSKDDLLLTDFEGALKFFRVQLPKRYRSEENAKKLMELACNMKISQKKLKKYEKEYHTMREQQAQQEDPIERFERENRRLQEANMRLEQENDDLAHELVTSKIALRKDLDNAEEKADALNKELLMTKQKLIDAEEEKRRLEEESAQLKEMCRRELDKAESEIKKNSSIIGDYKQICSQLSERLEKQQTANKVEIEKIRQKVDDCERCREFFNKEGRVKGISSTKEVLDEDTDEEKETLKNQLREMELELAQTKLQLVEAECKIQDLEHHLGLALNEVQAAKKTWFNRTLSSIKTATGVQGKETC</sequence>
<protein>
    <recommendedName>
        <fullName>Rab GTPase-activating protein 1</fullName>
    </recommendedName>
    <alternativeName>
        <fullName>GAP and centrosome-associated protein</fullName>
    </alternativeName>
    <alternativeName>
        <fullName>Rab6 GTPase-activating protein GAPCenA</fullName>
    </alternativeName>
</protein>
<keyword id="KW-0131">Cell cycle</keyword>
<keyword id="KW-0175">Coiled coil</keyword>
<keyword id="KW-0963">Cytoplasm</keyword>
<keyword id="KW-0206">Cytoskeleton</keyword>
<keyword id="KW-0343">GTPase activation</keyword>
<keyword id="KW-0597">Phosphoprotein</keyword>
<keyword id="KW-1185">Reference proteome</keyword>
<gene>
    <name evidence="3" type="primary">RABGAP1</name>
</gene>
<evidence type="ECO:0000250" key="1"/>
<evidence type="ECO:0000250" key="2">
    <source>
        <dbReference type="UniProtKB" id="A2AWA9"/>
    </source>
</evidence>
<evidence type="ECO:0000250" key="3">
    <source>
        <dbReference type="UniProtKB" id="Q9Y3P9"/>
    </source>
</evidence>
<evidence type="ECO:0000255" key="4"/>
<evidence type="ECO:0000255" key="5">
    <source>
        <dbReference type="PROSITE-ProRule" id="PRU00148"/>
    </source>
</evidence>
<evidence type="ECO:0000255" key="6">
    <source>
        <dbReference type="PROSITE-ProRule" id="PRU00163"/>
    </source>
</evidence>
<evidence type="ECO:0000256" key="7">
    <source>
        <dbReference type="SAM" id="MobiDB-lite"/>
    </source>
</evidence>
<evidence type="ECO:0000312" key="8">
    <source>
        <dbReference type="EMBL" id="CAH91179.1"/>
    </source>
</evidence>
<comment type="function">
    <text evidence="3">May act as a GTPase-activating protein of RAB6A. May play a role in microtubule nucleation by centrosome. May participate in a RAB6A-mediated pathway involved in the metaphase-anaphase transition (By similarity).</text>
</comment>
<comment type="subunit">
    <text evidence="3">Interacts with RAB6A and tubulin gamma.</text>
</comment>
<comment type="subcellular location">
    <subcellularLocation>
        <location evidence="3">Cytoplasm</location>
        <location evidence="3">Cytosol</location>
    </subcellularLocation>
    <subcellularLocation>
        <location evidence="3">Cytoplasm</location>
        <location evidence="3">Cytoskeleton</location>
        <location evidence="3">Microtubule organizing center</location>
        <location evidence="3">Centrosome</location>
    </subcellularLocation>
    <text evidence="3">Predominantly cytosolic but also associated with the centrosome.</text>
</comment>
<comment type="domain">
    <text evidence="1">The arginine and glutamine fingers are critical for the GTPase-activating mechanism, they pull out Rab's 'switch 2' glutamine and insert in Rab's active site.</text>
</comment>
<accession>Q5RAN1</accession>
<dbReference type="EMBL" id="CR858984">
    <property type="protein sequence ID" value="CAH91179.1"/>
    <property type="molecule type" value="mRNA"/>
</dbReference>
<dbReference type="RefSeq" id="NP_001125691.1">
    <property type="nucleotide sequence ID" value="NM_001132219.1"/>
</dbReference>
<dbReference type="RefSeq" id="XP_024107500.1">
    <property type="nucleotide sequence ID" value="XM_024251732.3"/>
</dbReference>
<dbReference type="RefSeq" id="XP_054375374.1">
    <property type="nucleotide sequence ID" value="XM_054519399.2"/>
</dbReference>
<dbReference type="RefSeq" id="XP_054375375.1">
    <property type="nucleotide sequence ID" value="XM_054519400.2"/>
</dbReference>
<dbReference type="SMR" id="Q5RAN1"/>
<dbReference type="FunCoup" id="Q5RAN1">
    <property type="interactions" value="3806"/>
</dbReference>
<dbReference type="STRING" id="9601.ENSPPYP00000021947"/>
<dbReference type="Ensembl" id="ENSPPYT00000022851.3">
    <property type="protein sequence ID" value="ENSPPYP00000021947.3"/>
    <property type="gene ID" value="ENSPPYG00000019586.3"/>
</dbReference>
<dbReference type="GeneID" id="100172613"/>
<dbReference type="KEGG" id="pon:100172613"/>
<dbReference type="CTD" id="23637"/>
<dbReference type="eggNOG" id="KOG1102">
    <property type="taxonomic scope" value="Eukaryota"/>
</dbReference>
<dbReference type="GeneTree" id="ENSGT00940000157216"/>
<dbReference type="InParanoid" id="Q5RAN1"/>
<dbReference type="OMA" id="MHSMGYV"/>
<dbReference type="OrthoDB" id="295078at2759"/>
<dbReference type="Proteomes" id="UP000001595">
    <property type="component" value="Chromosome 9"/>
</dbReference>
<dbReference type="GO" id="GO:0005813">
    <property type="term" value="C:centrosome"/>
    <property type="evidence" value="ECO:0007669"/>
    <property type="project" value="UniProtKB-SubCell"/>
</dbReference>
<dbReference type="GO" id="GO:0005829">
    <property type="term" value="C:cytosol"/>
    <property type="evidence" value="ECO:0007669"/>
    <property type="project" value="UniProtKB-SubCell"/>
</dbReference>
<dbReference type="GO" id="GO:0005096">
    <property type="term" value="F:GTPase activator activity"/>
    <property type="evidence" value="ECO:0007669"/>
    <property type="project" value="UniProtKB-KW"/>
</dbReference>
<dbReference type="GO" id="GO:0031267">
    <property type="term" value="F:small GTPase binding"/>
    <property type="evidence" value="ECO:0007669"/>
    <property type="project" value="Ensembl"/>
</dbReference>
<dbReference type="CDD" id="cd01211">
    <property type="entry name" value="PTB_Rab6GAP"/>
    <property type="match status" value="1"/>
</dbReference>
<dbReference type="FunFam" id="1.10.10.750:FF:000004">
    <property type="entry name" value="Putative rab gtpase-activating protein 1"/>
    <property type="match status" value="1"/>
</dbReference>
<dbReference type="FunFam" id="2.30.29.30:FF:000125">
    <property type="entry name" value="Putative rab gtpase-activating protein 1"/>
    <property type="match status" value="1"/>
</dbReference>
<dbReference type="FunFam" id="1.10.472.80:FF:000007">
    <property type="entry name" value="Rab GTPase-activating protein 1 isoform X1"/>
    <property type="match status" value="1"/>
</dbReference>
<dbReference type="FunFam" id="1.10.8.270:FF:000001">
    <property type="entry name" value="TBC1 domain family member 1"/>
    <property type="match status" value="1"/>
</dbReference>
<dbReference type="Gene3D" id="2.30.29.30">
    <property type="entry name" value="Pleckstrin-homology domain (PH domain)/Phosphotyrosine-binding domain (PTB)"/>
    <property type="match status" value="1"/>
</dbReference>
<dbReference type="Gene3D" id="1.10.8.270">
    <property type="entry name" value="putative rabgap domain of human tbc1 domain family member 14 like domains"/>
    <property type="match status" value="1"/>
</dbReference>
<dbReference type="Gene3D" id="1.10.10.750">
    <property type="entry name" value="Ypt/Rab-GAP domain of gyp1p, domain 1"/>
    <property type="match status" value="1"/>
</dbReference>
<dbReference type="Gene3D" id="1.10.472.80">
    <property type="entry name" value="Ypt/Rab-GAP domain of gyp1p, domain 3"/>
    <property type="match status" value="1"/>
</dbReference>
<dbReference type="InterPro" id="IPR022164">
    <property type="entry name" value="Kinesin-like"/>
</dbReference>
<dbReference type="InterPro" id="IPR011993">
    <property type="entry name" value="PH-like_dom_sf"/>
</dbReference>
<dbReference type="InterPro" id="IPR006020">
    <property type="entry name" value="PTB/PI_dom"/>
</dbReference>
<dbReference type="InterPro" id="IPR000195">
    <property type="entry name" value="Rab-GAP-TBC_dom"/>
</dbReference>
<dbReference type="InterPro" id="IPR035969">
    <property type="entry name" value="Rab-GAP_TBC_sf"/>
</dbReference>
<dbReference type="InterPro" id="IPR050302">
    <property type="entry name" value="Rab_GAP_TBC_domain"/>
</dbReference>
<dbReference type="PANTHER" id="PTHR47219:SF6">
    <property type="entry name" value="RAB GTPASE-ACTIVATING PROTEIN 1"/>
    <property type="match status" value="1"/>
</dbReference>
<dbReference type="PANTHER" id="PTHR47219">
    <property type="entry name" value="RAB GTPASE-ACTIVATING PROTEIN 1-LIKE"/>
    <property type="match status" value="1"/>
</dbReference>
<dbReference type="Pfam" id="PF12473">
    <property type="entry name" value="DUF3694"/>
    <property type="match status" value="1"/>
</dbReference>
<dbReference type="Pfam" id="PF00640">
    <property type="entry name" value="PID"/>
    <property type="match status" value="1"/>
</dbReference>
<dbReference type="Pfam" id="PF00566">
    <property type="entry name" value="RabGAP-TBC"/>
    <property type="match status" value="1"/>
</dbReference>
<dbReference type="SMART" id="SM00462">
    <property type="entry name" value="PTB"/>
    <property type="match status" value="1"/>
</dbReference>
<dbReference type="SMART" id="SM00164">
    <property type="entry name" value="TBC"/>
    <property type="match status" value="1"/>
</dbReference>
<dbReference type="SUPFAM" id="SSF50729">
    <property type="entry name" value="PH domain-like"/>
    <property type="match status" value="1"/>
</dbReference>
<dbReference type="SUPFAM" id="SSF47923">
    <property type="entry name" value="Ypt/Rab-GAP domain of gyp1p"/>
    <property type="match status" value="2"/>
</dbReference>
<dbReference type="PROSITE" id="PS01179">
    <property type="entry name" value="PID"/>
    <property type="match status" value="1"/>
</dbReference>
<dbReference type="PROSITE" id="PS50086">
    <property type="entry name" value="TBC_RABGAP"/>
    <property type="match status" value="1"/>
</dbReference>
<name>RBGP1_PONAB</name>
<feature type="chain" id="PRO_0000298781" description="Rab GTPase-activating protein 1">
    <location>
        <begin position="1"/>
        <end position="1069"/>
    </location>
</feature>
<feature type="domain" description="PID" evidence="5">
    <location>
        <begin position="142"/>
        <end position="298"/>
    </location>
</feature>
<feature type="domain" description="Rab-GAP TBC" evidence="6">
    <location>
        <begin position="566"/>
        <end position="752"/>
    </location>
</feature>
<feature type="region of interest" description="Disordered" evidence="7">
    <location>
        <begin position="1"/>
        <end position="79"/>
    </location>
</feature>
<feature type="region of interest" description="Disordered" evidence="7">
    <location>
        <begin position="482"/>
        <end position="527"/>
    </location>
</feature>
<feature type="coiled-coil region" evidence="4">
    <location>
        <begin position="798"/>
        <end position="1047"/>
    </location>
</feature>
<feature type="compositionally biased region" description="Low complexity" evidence="7">
    <location>
        <begin position="7"/>
        <end position="22"/>
    </location>
</feature>
<feature type="compositionally biased region" description="Polar residues" evidence="7">
    <location>
        <begin position="489"/>
        <end position="506"/>
    </location>
</feature>
<feature type="compositionally biased region" description="Acidic residues" evidence="7">
    <location>
        <begin position="510"/>
        <end position="520"/>
    </location>
</feature>
<feature type="site" description="Arginine finger" evidence="1">
    <location>
        <position position="608"/>
    </location>
</feature>
<feature type="site" description="Glutamine finger" evidence="1">
    <location>
        <position position="649"/>
    </location>
</feature>
<feature type="modified residue" description="Phosphoserine" evidence="3">
    <location>
        <position position="42"/>
    </location>
</feature>
<feature type="modified residue" description="Phosphoserine" evidence="2">
    <location>
        <position position="360"/>
    </location>
</feature>
<feature type="modified residue" description="Phosphothreonine" evidence="3">
    <location>
        <position position="996"/>
    </location>
</feature>
<proteinExistence type="evidence at transcript level"/>
<reference evidence="8" key="1">
    <citation type="submission" date="2004-11" db="EMBL/GenBank/DDBJ databases">
        <authorList>
            <consortium name="The German cDNA consortium"/>
        </authorList>
    </citation>
    <scope>NUCLEOTIDE SEQUENCE [LARGE SCALE MRNA]</scope>
    <source>
        <tissue evidence="8">Brain cortex</tissue>
    </source>
</reference>
<organism>
    <name type="scientific">Pongo abelii</name>
    <name type="common">Sumatran orangutan</name>
    <name type="synonym">Pongo pygmaeus abelii</name>
    <dbReference type="NCBI Taxonomy" id="9601"/>
    <lineage>
        <taxon>Eukaryota</taxon>
        <taxon>Metazoa</taxon>
        <taxon>Chordata</taxon>
        <taxon>Craniata</taxon>
        <taxon>Vertebrata</taxon>
        <taxon>Euteleostomi</taxon>
        <taxon>Mammalia</taxon>
        <taxon>Eutheria</taxon>
        <taxon>Euarchontoglires</taxon>
        <taxon>Primates</taxon>
        <taxon>Haplorrhini</taxon>
        <taxon>Catarrhini</taxon>
        <taxon>Hominidae</taxon>
        <taxon>Pongo</taxon>
    </lineage>
</organism>